<protein>
    <recommendedName>
        <fullName evidence="1">Large ribosomal subunit protein uL14</fullName>
    </recommendedName>
    <alternativeName>
        <fullName evidence="2">50S ribosomal protein L14</fullName>
    </alternativeName>
</protein>
<sequence length="123" mass="13555">MIQEQTMLNVADNSGARRVMCIKVLGGSHRRYAGVGDIIKITIKEAIPRGKVKKGDVLKAVVVRTKKGVRRPDGSVIRFDGNACVILNNNSEQPIGTRIFGPVTRELRTEKFMKIISLAPEVL</sequence>
<feature type="chain" id="PRO_1000055555" description="Large ribosomal subunit protein uL14">
    <location>
        <begin position="1"/>
        <end position="123"/>
    </location>
</feature>
<comment type="function">
    <text evidence="1">Binds to 23S rRNA. Forms part of two intersubunit bridges in the 70S ribosome.</text>
</comment>
<comment type="subunit">
    <text evidence="1">Part of the 50S ribosomal subunit. Forms a cluster with proteins L3 and L19. In the 70S ribosome, L14 and L19 interact and together make contacts with the 16S rRNA in bridges B5 and B8.</text>
</comment>
<comment type="similarity">
    <text evidence="1">Belongs to the universal ribosomal protein uL14 family.</text>
</comment>
<reference key="1">
    <citation type="submission" date="2007-08" db="EMBL/GenBank/DDBJ databases">
        <authorList>
            <consortium name="The Citrobacter koseri Genome Sequencing Project"/>
            <person name="McClelland M."/>
            <person name="Sanderson E.K."/>
            <person name="Porwollik S."/>
            <person name="Spieth J."/>
            <person name="Clifton W.S."/>
            <person name="Latreille P."/>
            <person name="Courtney L."/>
            <person name="Wang C."/>
            <person name="Pepin K."/>
            <person name="Bhonagiri V."/>
            <person name="Nash W."/>
            <person name="Johnson M."/>
            <person name="Thiruvilangam P."/>
            <person name="Wilson R."/>
        </authorList>
    </citation>
    <scope>NUCLEOTIDE SEQUENCE [LARGE SCALE GENOMIC DNA]</scope>
    <source>
        <strain>ATCC BAA-895 / CDC 4225-83 / SGSC4696</strain>
    </source>
</reference>
<evidence type="ECO:0000255" key="1">
    <source>
        <dbReference type="HAMAP-Rule" id="MF_01367"/>
    </source>
</evidence>
<evidence type="ECO:0000305" key="2"/>
<accession>A8AQK6</accession>
<dbReference type="EMBL" id="CP000822">
    <property type="protein sequence ID" value="ABV15769.1"/>
    <property type="molecule type" value="Genomic_DNA"/>
</dbReference>
<dbReference type="RefSeq" id="WP_002919748.1">
    <property type="nucleotide sequence ID" value="NC_009792.1"/>
</dbReference>
<dbReference type="SMR" id="A8AQK6"/>
<dbReference type="STRING" id="290338.CKO_04724"/>
<dbReference type="GeneID" id="97442850"/>
<dbReference type="KEGG" id="cko:CKO_04724"/>
<dbReference type="HOGENOM" id="CLU_095071_2_1_6"/>
<dbReference type="OrthoDB" id="9806379at2"/>
<dbReference type="Proteomes" id="UP000008148">
    <property type="component" value="Chromosome"/>
</dbReference>
<dbReference type="GO" id="GO:0022625">
    <property type="term" value="C:cytosolic large ribosomal subunit"/>
    <property type="evidence" value="ECO:0007669"/>
    <property type="project" value="TreeGrafter"/>
</dbReference>
<dbReference type="GO" id="GO:0070180">
    <property type="term" value="F:large ribosomal subunit rRNA binding"/>
    <property type="evidence" value="ECO:0007669"/>
    <property type="project" value="TreeGrafter"/>
</dbReference>
<dbReference type="GO" id="GO:0003735">
    <property type="term" value="F:structural constituent of ribosome"/>
    <property type="evidence" value="ECO:0007669"/>
    <property type="project" value="InterPro"/>
</dbReference>
<dbReference type="GO" id="GO:0006412">
    <property type="term" value="P:translation"/>
    <property type="evidence" value="ECO:0007669"/>
    <property type="project" value="UniProtKB-UniRule"/>
</dbReference>
<dbReference type="CDD" id="cd00337">
    <property type="entry name" value="Ribosomal_uL14"/>
    <property type="match status" value="1"/>
</dbReference>
<dbReference type="FunFam" id="2.40.150.20:FF:000001">
    <property type="entry name" value="50S ribosomal protein L14"/>
    <property type="match status" value="1"/>
</dbReference>
<dbReference type="Gene3D" id="2.40.150.20">
    <property type="entry name" value="Ribosomal protein L14"/>
    <property type="match status" value="1"/>
</dbReference>
<dbReference type="HAMAP" id="MF_01367">
    <property type="entry name" value="Ribosomal_uL14"/>
    <property type="match status" value="1"/>
</dbReference>
<dbReference type="InterPro" id="IPR000218">
    <property type="entry name" value="Ribosomal_uL14"/>
</dbReference>
<dbReference type="InterPro" id="IPR005745">
    <property type="entry name" value="Ribosomal_uL14_bac-type"/>
</dbReference>
<dbReference type="InterPro" id="IPR019972">
    <property type="entry name" value="Ribosomal_uL14_CS"/>
</dbReference>
<dbReference type="InterPro" id="IPR036853">
    <property type="entry name" value="Ribosomal_uL14_sf"/>
</dbReference>
<dbReference type="NCBIfam" id="TIGR01067">
    <property type="entry name" value="rplN_bact"/>
    <property type="match status" value="1"/>
</dbReference>
<dbReference type="PANTHER" id="PTHR11761">
    <property type="entry name" value="50S/60S RIBOSOMAL PROTEIN L14/L23"/>
    <property type="match status" value="1"/>
</dbReference>
<dbReference type="PANTHER" id="PTHR11761:SF3">
    <property type="entry name" value="LARGE RIBOSOMAL SUBUNIT PROTEIN UL14M"/>
    <property type="match status" value="1"/>
</dbReference>
<dbReference type="Pfam" id="PF00238">
    <property type="entry name" value="Ribosomal_L14"/>
    <property type="match status" value="1"/>
</dbReference>
<dbReference type="SMART" id="SM01374">
    <property type="entry name" value="Ribosomal_L14"/>
    <property type="match status" value="1"/>
</dbReference>
<dbReference type="SUPFAM" id="SSF50193">
    <property type="entry name" value="Ribosomal protein L14"/>
    <property type="match status" value="1"/>
</dbReference>
<dbReference type="PROSITE" id="PS00049">
    <property type="entry name" value="RIBOSOMAL_L14"/>
    <property type="match status" value="1"/>
</dbReference>
<name>RL14_CITK8</name>
<gene>
    <name evidence="1" type="primary">rplN</name>
    <name type="ordered locus">CKO_04724</name>
</gene>
<keyword id="KW-1185">Reference proteome</keyword>
<keyword id="KW-0687">Ribonucleoprotein</keyword>
<keyword id="KW-0689">Ribosomal protein</keyword>
<keyword id="KW-0694">RNA-binding</keyword>
<keyword id="KW-0699">rRNA-binding</keyword>
<organism>
    <name type="scientific">Citrobacter koseri (strain ATCC BAA-895 / CDC 4225-83 / SGSC4696)</name>
    <dbReference type="NCBI Taxonomy" id="290338"/>
    <lineage>
        <taxon>Bacteria</taxon>
        <taxon>Pseudomonadati</taxon>
        <taxon>Pseudomonadota</taxon>
        <taxon>Gammaproteobacteria</taxon>
        <taxon>Enterobacterales</taxon>
        <taxon>Enterobacteriaceae</taxon>
        <taxon>Citrobacter</taxon>
    </lineage>
</organism>
<proteinExistence type="inferred from homology"/>